<gene>
    <name type="primary">CUL7</name>
</gene>
<organism>
    <name type="scientific">Pongo abelii</name>
    <name type="common">Sumatran orangutan</name>
    <name type="synonym">Pongo pygmaeus abelii</name>
    <dbReference type="NCBI Taxonomy" id="9601"/>
    <lineage>
        <taxon>Eukaryota</taxon>
        <taxon>Metazoa</taxon>
        <taxon>Chordata</taxon>
        <taxon>Craniata</taxon>
        <taxon>Vertebrata</taxon>
        <taxon>Euteleostomi</taxon>
        <taxon>Mammalia</taxon>
        <taxon>Eutheria</taxon>
        <taxon>Euarchontoglires</taxon>
        <taxon>Primates</taxon>
        <taxon>Haplorrhini</taxon>
        <taxon>Catarrhini</taxon>
        <taxon>Hominidae</taxon>
        <taxon>Pongo</taxon>
    </lineage>
</organism>
<keyword id="KW-0963">Cytoplasm</keyword>
<keyword id="KW-0206">Cytoskeleton</keyword>
<keyword id="KW-0333">Golgi apparatus</keyword>
<keyword id="KW-1017">Isopeptide bond</keyword>
<keyword id="KW-0597">Phosphoprotein</keyword>
<keyword id="KW-1185">Reference proteome</keyword>
<keyword id="KW-0832">Ubl conjugation</keyword>
<keyword id="KW-0833">Ubl conjugation pathway</keyword>
<name>CUL7_PONAB</name>
<feature type="chain" id="PRO_0000223468" description="Cullin-7">
    <location>
        <begin position="1"/>
        <end position="1729"/>
    </location>
</feature>
<feature type="domain" description="CPH" evidence="4">
    <location>
        <begin position="392"/>
        <end position="465"/>
    </location>
</feature>
<feature type="domain" description="DOC" evidence="6">
    <location>
        <begin position="845"/>
        <end position="1024"/>
    </location>
</feature>
<feature type="region of interest" description="Disordered" evidence="7">
    <location>
        <begin position="350"/>
        <end position="388"/>
    </location>
</feature>
<feature type="region of interest" description="Disordered" evidence="7">
    <location>
        <begin position="632"/>
        <end position="654"/>
    </location>
</feature>
<feature type="region of interest" description="Disordered" evidence="7">
    <location>
        <begin position="1373"/>
        <end position="1405"/>
    </location>
</feature>
<feature type="compositionally biased region" description="Basic and acidic residues" evidence="7">
    <location>
        <begin position="632"/>
        <end position="642"/>
    </location>
</feature>
<feature type="modified residue" description="Phosphoserine" evidence="2">
    <location>
        <position position="371"/>
    </location>
</feature>
<feature type="cross-link" description="Glycyl lysine isopeptide (Lys-Gly) (interchain with G-Cter in NEDD8)" evidence="1">
    <location>
        <position position="1607"/>
    </location>
</feature>
<protein>
    <recommendedName>
        <fullName>Cullin-7</fullName>
        <shortName>CUL-7</shortName>
    </recommendedName>
</protein>
<accession>Q5RCJ3</accession>
<proteinExistence type="evidence at transcript level"/>
<dbReference type="EMBL" id="CR858277">
    <property type="protein sequence ID" value="CAH90514.1"/>
    <property type="molecule type" value="mRNA"/>
</dbReference>
<dbReference type="RefSeq" id="NP_001125271.1">
    <property type="nucleotide sequence ID" value="NM_001131799.1"/>
</dbReference>
<dbReference type="BMRB" id="Q5RCJ3"/>
<dbReference type="SMR" id="Q5RCJ3"/>
<dbReference type="FunCoup" id="Q5RCJ3">
    <property type="interactions" value="1003"/>
</dbReference>
<dbReference type="STRING" id="9601.ENSPPYP00000018598"/>
<dbReference type="GeneID" id="100172168"/>
<dbReference type="KEGG" id="pon:100172168"/>
<dbReference type="CTD" id="9820"/>
<dbReference type="eggNOG" id="ENOG502RDJD">
    <property type="taxonomic scope" value="Eukaryota"/>
</dbReference>
<dbReference type="InParanoid" id="Q5RCJ3"/>
<dbReference type="OrthoDB" id="9908599at2759"/>
<dbReference type="UniPathway" id="UPA00143"/>
<dbReference type="Proteomes" id="UP000001595">
    <property type="component" value="Unplaced"/>
</dbReference>
<dbReference type="GO" id="GO:1990393">
    <property type="term" value="C:3M complex"/>
    <property type="evidence" value="ECO:0000250"/>
    <property type="project" value="UniProtKB"/>
</dbReference>
<dbReference type="GO" id="GO:0005813">
    <property type="term" value="C:centrosome"/>
    <property type="evidence" value="ECO:0000250"/>
    <property type="project" value="UniProtKB"/>
</dbReference>
<dbReference type="GO" id="GO:0031467">
    <property type="term" value="C:Cul7-RING ubiquitin ligase complex"/>
    <property type="evidence" value="ECO:0000250"/>
    <property type="project" value="UniProtKB"/>
</dbReference>
<dbReference type="GO" id="GO:0005737">
    <property type="term" value="C:cytoplasm"/>
    <property type="evidence" value="ECO:0000250"/>
    <property type="project" value="UniProtKB"/>
</dbReference>
<dbReference type="GO" id="GO:0005794">
    <property type="term" value="C:Golgi apparatus"/>
    <property type="evidence" value="ECO:0000250"/>
    <property type="project" value="UniProtKB"/>
</dbReference>
<dbReference type="GO" id="GO:0048471">
    <property type="term" value="C:perinuclear region of cytoplasm"/>
    <property type="evidence" value="ECO:0000250"/>
    <property type="project" value="UniProtKB"/>
</dbReference>
<dbReference type="GO" id="GO:0031625">
    <property type="term" value="F:ubiquitin protein ligase binding"/>
    <property type="evidence" value="ECO:0007669"/>
    <property type="project" value="InterPro"/>
</dbReference>
<dbReference type="GO" id="GO:0001837">
    <property type="term" value="P:epithelial to mesenchymal transition"/>
    <property type="evidence" value="ECO:0000250"/>
    <property type="project" value="UniProtKB"/>
</dbReference>
<dbReference type="GO" id="GO:0007030">
    <property type="term" value="P:Golgi organization"/>
    <property type="evidence" value="ECO:0000250"/>
    <property type="project" value="UniProtKB"/>
</dbReference>
<dbReference type="GO" id="GO:0000226">
    <property type="term" value="P:microtubule cytoskeleton organization"/>
    <property type="evidence" value="ECO:0000250"/>
    <property type="project" value="UniProtKB"/>
</dbReference>
<dbReference type="GO" id="GO:0000281">
    <property type="term" value="P:mitotic cytokinesis"/>
    <property type="evidence" value="ECO:0000250"/>
    <property type="project" value="UniProtKB"/>
</dbReference>
<dbReference type="GO" id="GO:0001890">
    <property type="term" value="P:placenta development"/>
    <property type="evidence" value="ECO:0000250"/>
    <property type="project" value="UniProtKB"/>
</dbReference>
<dbReference type="GO" id="GO:0050775">
    <property type="term" value="P:positive regulation of dendrite morphogenesis"/>
    <property type="evidence" value="ECO:0000250"/>
    <property type="project" value="UniProtKB"/>
</dbReference>
<dbReference type="GO" id="GO:0016567">
    <property type="term" value="P:protein ubiquitination"/>
    <property type="evidence" value="ECO:0000250"/>
    <property type="project" value="UniProtKB"/>
</dbReference>
<dbReference type="GO" id="GO:0007088">
    <property type="term" value="P:regulation of mitotic nuclear division"/>
    <property type="evidence" value="ECO:0000250"/>
    <property type="project" value="UniProtKB"/>
</dbReference>
<dbReference type="GO" id="GO:0006511">
    <property type="term" value="P:ubiquitin-dependent protein catabolic process"/>
    <property type="evidence" value="ECO:0007669"/>
    <property type="project" value="InterPro"/>
</dbReference>
<dbReference type="FunFam" id="1.10.10.10:FF:000207">
    <property type="entry name" value="Cullin 9"/>
    <property type="match status" value="1"/>
</dbReference>
<dbReference type="FunFam" id="2.60.120.260:FF:000046">
    <property type="entry name" value="Cullin 9"/>
    <property type="match status" value="1"/>
</dbReference>
<dbReference type="FunFam" id="3.30.230.130:FF:000009">
    <property type="entry name" value="Cullin 9"/>
    <property type="match status" value="1"/>
</dbReference>
<dbReference type="FunFam" id="2.30.30.30:FF:000015">
    <property type="entry name" value="E3 ubiquitin-protein ligase HERC2"/>
    <property type="match status" value="1"/>
</dbReference>
<dbReference type="Gene3D" id="2.30.30.30">
    <property type="match status" value="1"/>
</dbReference>
<dbReference type="Gene3D" id="1.20.1310.10">
    <property type="entry name" value="Cullin Repeats"/>
    <property type="match status" value="1"/>
</dbReference>
<dbReference type="Gene3D" id="3.30.230.130">
    <property type="entry name" value="Cullin, Chain C, Domain 2"/>
    <property type="match status" value="1"/>
</dbReference>
<dbReference type="Gene3D" id="2.60.120.260">
    <property type="entry name" value="Galactose-binding domain-like"/>
    <property type="match status" value="1"/>
</dbReference>
<dbReference type="Gene3D" id="1.10.10.10">
    <property type="entry name" value="Winged helix-like DNA-binding domain superfamily/Winged helix DNA-binding domain"/>
    <property type="match status" value="1"/>
</dbReference>
<dbReference type="InterPro" id="IPR004939">
    <property type="entry name" value="APC_su10/DOC_dom"/>
</dbReference>
<dbReference type="InterPro" id="IPR016024">
    <property type="entry name" value="ARM-type_fold"/>
</dbReference>
<dbReference type="InterPro" id="IPR056405">
    <property type="entry name" value="ARM_CUL7_CUL9"/>
</dbReference>
<dbReference type="InterPro" id="IPR021097">
    <property type="entry name" value="CPH_domain"/>
</dbReference>
<dbReference type="InterPro" id="IPR055486">
    <property type="entry name" value="CUL7/CUL9_N"/>
</dbReference>
<dbReference type="InterPro" id="IPR045093">
    <property type="entry name" value="Cullin"/>
</dbReference>
<dbReference type="InterPro" id="IPR016158">
    <property type="entry name" value="Cullin_homology"/>
</dbReference>
<dbReference type="InterPro" id="IPR036317">
    <property type="entry name" value="Cullin_homology_sf"/>
</dbReference>
<dbReference type="InterPro" id="IPR001373">
    <property type="entry name" value="Cullin_N"/>
</dbReference>
<dbReference type="InterPro" id="IPR019559">
    <property type="entry name" value="Cullin_neddylation_domain"/>
</dbReference>
<dbReference type="InterPro" id="IPR008979">
    <property type="entry name" value="Galactose-bd-like_sf"/>
</dbReference>
<dbReference type="InterPro" id="IPR014722">
    <property type="entry name" value="Rib_uL2_dom2"/>
</dbReference>
<dbReference type="InterPro" id="IPR036388">
    <property type="entry name" value="WH-like_DNA-bd_sf"/>
</dbReference>
<dbReference type="PANTHER" id="PTHR22771">
    <property type="entry name" value="CULLIN AND GALACTOSE-BINDING DOMAIN-CONTAINING"/>
    <property type="match status" value="1"/>
</dbReference>
<dbReference type="PANTHER" id="PTHR22771:SF3">
    <property type="entry name" value="CULLIN-7"/>
    <property type="match status" value="1"/>
</dbReference>
<dbReference type="Pfam" id="PF03256">
    <property type="entry name" value="ANAPC10"/>
    <property type="match status" value="1"/>
</dbReference>
<dbReference type="Pfam" id="PF24742">
    <property type="entry name" value="ARM_CUL7_CUL9"/>
    <property type="match status" value="1"/>
</dbReference>
<dbReference type="Pfam" id="PF11515">
    <property type="entry name" value="Cul7"/>
    <property type="match status" value="1"/>
</dbReference>
<dbReference type="Pfam" id="PF23168">
    <property type="entry name" value="CUL7_CUL9_N"/>
    <property type="match status" value="1"/>
</dbReference>
<dbReference type="Pfam" id="PF00888">
    <property type="entry name" value="Cullin"/>
    <property type="match status" value="1"/>
</dbReference>
<dbReference type="SMART" id="SM01337">
    <property type="entry name" value="APC10"/>
    <property type="match status" value="1"/>
</dbReference>
<dbReference type="SMART" id="SM00884">
    <property type="entry name" value="Cullin_Nedd8"/>
    <property type="match status" value="1"/>
</dbReference>
<dbReference type="SUPFAM" id="SSF48371">
    <property type="entry name" value="ARM repeat"/>
    <property type="match status" value="1"/>
</dbReference>
<dbReference type="SUPFAM" id="SSF75632">
    <property type="entry name" value="Cullin homology domain"/>
    <property type="match status" value="1"/>
</dbReference>
<dbReference type="SUPFAM" id="SSF49785">
    <property type="entry name" value="Galactose-binding domain-like"/>
    <property type="match status" value="1"/>
</dbReference>
<dbReference type="SUPFAM" id="SSF63748">
    <property type="entry name" value="Tudor/PWWP/MBT"/>
    <property type="match status" value="1"/>
</dbReference>
<dbReference type="PROSITE" id="PS50069">
    <property type="entry name" value="CULLIN_2"/>
    <property type="match status" value="1"/>
</dbReference>
<dbReference type="PROSITE" id="PS51284">
    <property type="entry name" value="DOC"/>
    <property type="match status" value="1"/>
</dbReference>
<sequence>MVGELRYREFRVPLGPGLHAYPDELIRQRVGHDGHPEYQIRWLILRRGDEGDGGSGQVDCKAEHILLWMSKDEIYANCHKMLGEDGQVIGPSQESTGEVGALDKSVLEEMETDVKSLIQRALRQLEECVGTIPPAPLLHTVHVLSAYASIEPLTGVFKDPRVLDLLMHMLSSPDYQIRWSAGRMIQALSSHDAGEGQCGEEGKAGEELGRLRDSQDTVAGASDLIRTRTQILLSLSQQEAIEKHLDFDSRCALLALFAQATLSEHPMSFEGIQLPQVPGRVLFSLVKRYLHVTSLLDQLNDSAAEPGAQNTSAPEEWSGERGQLELEFSMAMGTLISELVQAIRWDQASDRPRSSARSPGSIFQPQLADVSPGLPATQAQPSFRRSRHFRPRSEFASGNTYALYVRDTLQPGMRVRMLDEYEEISAGDEGEFRQSNNGVPPVQVLWESTGRTYWVHWHMLEILGFEEDIEDMVEADEYQGAVASRVLGRALPAWRWRPMTELYAVPYVLPEDEDSEECEHLTLAEWWELLFFIKKLDGPDHQEVLQILQENLDGEILDDEILAELAVPIELAQDLLLTLPQRLNDSALRDLINCHVYKKYGPEALAGNPAYPSLLEAQEDVLLEAQAQAKDSEDAAKVEAKEPPSQSPNTPLQRLVEGYGPAGKILLDLEQALSSEGTQENKVKPLLLQLQRQPQPFLALMQSLDTPETNRTLHLTVLRILKQLVDFPEALLLPWHEAVDACMACLRSPNTDREVLQELIFFLHRLTSVSRDYAVVLNQLGARDAISKALEKHLGKLELAQELRDMVFKCEKHAHLYRELITNILGGCIQMVLGQIEDHRRTHRPINIPFFDVFLRYLCQGSSVEVKEDKCWEKVEVSSNPHRASKLTDRNPKTYWESNGSAGSRYITLHMRQGILIRQLTLLVASEDSSYMPARVVVCGGDSTSSLHTELNSVNVMPSASRVILLENLTRFWPIIQIRIKRCQQGGIDTRIRGLETLGPKPTFWPVFREQLCRHTRLFYMVRAQAWSQDMAEDRRSLLHLSSRLNGALRQEQNFADRFLPDNEAAQALGKTCWEALVSPVVQNITSPDEDGISPLGWLLDQYLECQEAVFNPQSRGPAFFSRVRRLTHLLVHVEPCEAPPPVVATPRPKGRNRSHDWSSLATRGLPSSIMRNLTRCRRAVVEKQVNNFLTSSWRDDDFVPRYCEHFNILQNSSSELFGPRAAFLLALQNGCAGALLKLPFLKAAHVSEQFARHIDQQIQGSRIGGAQEMERLAQLQQCLQAVLIFSGLEIATTFEHYYQHYMADRLLGVVSSWLEGAVLEQIGPCFPNRLPQQMLQSLSTSKELQRQFHVYQLQQLDQELLKLEDTEKKIQVGHGASGKEHKSEKEEEAGAAAAVDVAEGEEEEEENEDLYYEGAMPEVSVLVLSRHCWPVASICHTLNPRTCLPSYLRGTLNRYSNFYNKSQSHPALERGSQRRLQWTWLGWAELQFGNQTLHVSTVQMWLLLYLNDLKAVSVESLLALSGLSADMLNQAIGPLTSSRGPLDLHEQKDIPGGVLKIRDGSKEPRSRWDIVRLIPPQTYLQAEGEEGRNLEKRRNLLNCLIVRILKAHGDEGLHIDQLVCLVLEAWQKGPCPPRGLVSSLGKGSACSSTDVLSCILHLLGKGTLRRHDDRPQVLSYAVPVTVMEPHTESLNPGSSGPNPPLTFHTVQIRSRGVPYASCTATQSFSTFR</sequence>
<comment type="function">
    <text evidence="2 3">Core component of the 3M and Cul7-RING(FBXW8) complexes, which mediate the ubiquitination and subsequent proteasomal degradation of target proteins (By similarity). Core component of the 3M complex, a complex required to regulate microtubule dynamics and genome integrity (By similarity). It is unclear how the 3M complex regulates microtubules, it could act by controlling the level of a microtubule stabilizer (By similarity). The Cul7-RING(FBXW8) complex alone lacks ubiquitination activity and does not promote polyubiquitination and proteasomal degradation of p53/TP53 (By similarity). However it mediates recruitment of p53/TP53 for ubiquitination by neddylated CUL1-RBX1 (By similarity). Interaction with CUL9 is required to inhibit CUL9 activity and ubiquitination of BIRC5 (By similarity). The Cul7-RING(FBXW8) complex also mediates ubiquitination and consequent degradation of target proteins such as GORASP1, IRS1 and MAP4K1/HPK1 (By similarity). Ubiquitination of GORASP1 regulates Golgi morphogenesis and dendrite patterning in brain (By similarity). Mediates ubiquitination and degradation of IRS1 in a mTOR-dependent manner: the Cul7-RING(FBXW8) complex recognizes and binds IRS1 previously phosphorylated by S6 kinase (RPS6KB1 or RPS6KB2) (By similarity). The Cul7-RING(FBXW8) complex also mediates ubiquitination of MAP4K1/HPK1: recognizes and binds autophosphorylated MAP4K1/HPK1, leading to its degradation, thereby affecting cell proliferation and differentiation (By similarity). Acts as a regulator in trophoblast cell epithelial-mesenchymal transition and placental development (By similarity). While the Cul7-RING(FBXW8) and the 3M complexes are associated and involved in common processes, CUL7 and the Cul7-RING(FBXW8) complex may have additional functions (By similarity). Probably plays a role in the degradation of proteins involved in endothelial proliferation and/or differentiation (By similarity).</text>
</comment>
<comment type="pathway">
    <text>Protein modification; protein ubiquitination.</text>
</comment>
<comment type="subunit">
    <text evidence="2">Component of the 3M complex, composed of core components CUL7, CCDC8 and OBSL1 (By similarity). Component of the Cul7-RING(FBXW8) complex consisting of CUL7, RBX1, SKP1 and FBXW8 (By similarity). Within the Cul7-RING(FBXW8) complex interacts with FBXW8 and RBX1, but not with SKP1 (By similarity). Interacts with CUL1 (via the C-terminal domain); the interaction seems to be mediated by FBXW8; it is likely specific to FBXW8, but not other F-box proteins (By similarity). Interacts (via the CPH domain) with p53/TP53; the interaction preferentially involves tetrameric and dimeric p53/TP53; this interaction recruits p53/TP53 for ubiquitination by neddylated CUL1-RBX1 (By similarity). The CUL7-CUL9 heterodimer seems to interact specifically with p53/TP53 (By similarity). Interacts with FBXW8; interaction is mutually exclusive of binding to CUL9 or p53/TP53 (By similarity). Interacts with CUL9; leading to inhibited CUL9 activity (By similarity). Interacts with OBSL1 (By similarity). Interacts (as part of the 3M complex) with HDAC4 and HDAC5; it is negatively regulated by ANKRA2 (By similarity).</text>
</comment>
<comment type="subcellular location">
    <subcellularLocation>
        <location evidence="1">Cytoplasm</location>
    </subcellularLocation>
    <subcellularLocation>
        <location evidence="1">Cytoplasm</location>
        <location evidence="1">Cytoskeleton</location>
        <location evidence="1">Microtubule organizing center</location>
        <location evidence="1">Centrosome</location>
    </subcellularLocation>
    <subcellularLocation>
        <location evidence="1">Cytoplasm</location>
        <location evidence="1">Perinuclear region</location>
    </subcellularLocation>
    <subcellularLocation>
        <location evidence="1">Golgi apparatus</location>
    </subcellularLocation>
    <text evidence="1">Colocalizes with FBXW8 at the Golgi apparatus in neurons; localization to Golgi is mediated by OBSL1. During mitosis, localizes to the mitotic apparatus. CCDC8 is required for centrosomal location (By similarity).</text>
</comment>
<comment type="domain">
    <text evidence="2">The CPH domain is essential for interaction with p53/TP53.</text>
</comment>
<comment type="similarity">
    <text evidence="5">Belongs to the cullin family.</text>
</comment>
<reference key="1">
    <citation type="submission" date="2004-11" db="EMBL/GenBank/DDBJ databases">
        <authorList>
            <consortium name="The German cDNA consortium"/>
        </authorList>
    </citation>
    <scope>NUCLEOTIDE SEQUENCE [LARGE SCALE MRNA]</scope>
    <source>
        <tissue>Kidney</tissue>
    </source>
</reference>
<evidence type="ECO:0000250" key="1"/>
<evidence type="ECO:0000250" key="2">
    <source>
        <dbReference type="UniProtKB" id="Q14999"/>
    </source>
</evidence>
<evidence type="ECO:0000250" key="3">
    <source>
        <dbReference type="UniProtKB" id="Q8VE73"/>
    </source>
</evidence>
<evidence type="ECO:0000255" key="4"/>
<evidence type="ECO:0000255" key="5">
    <source>
        <dbReference type="PROSITE-ProRule" id="PRU00330"/>
    </source>
</evidence>
<evidence type="ECO:0000255" key="6">
    <source>
        <dbReference type="PROSITE-ProRule" id="PRU00614"/>
    </source>
</evidence>
<evidence type="ECO:0000256" key="7">
    <source>
        <dbReference type="SAM" id="MobiDB-lite"/>
    </source>
</evidence>